<keyword id="KW-1005">Bacterial flagellum biogenesis</keyword>
<keyword id="KW-0963">Cytoplasm</keyword>
<keyword id="KW-0678">Repressor</keyword>
<keyword id="KW-0694">RNA-binding</keyword>
<keyword id="KW-0810">Translation regulation</keyword>
<evidence type="ECO:0000255" key="1">
    <source>
        <dbReference type="HAMAP-Rule" id="MF_00167"/>
    </source>
</evidence>
<protein>
    <recommendedName>
        <fullName evidence="1">Translational regulator CsrA</fullName>
    </recommendedName>
</protein>
<organism>
    <name type="scientific">Thermotoga petrophila (strain ATCC BAA-488 / DSM 13995 / JCM 10881 / RKU-1)</name>
    <dbReference type="NCBI Taxonomy" id="390874"/>
    <lineage>
        <taxon>Bacteria</taxon>
        <taxon>Thermotogati</taxon>
        <taxon>Thermotogota</taxon>
        <taxon>Thermotogae</taxon>
        <taxon>Thermotogales</taxon>
        <taxon>Thermotogaceae</taxon>
        <taxon>Thermotoga</taxon>
    </lineage>
</organism>
<sequence length="83" mass="9176">MLVLTRRVGEKIVIGEDIVITVLKIEGNSVKIGIEAPRHVKILREELYEELKSENIKASEVSKDDLKGVLKNDKGYKGPGTSS</sequence>
<feature type="chain" id="PRO_1000023434" description="Translational regulator CsrA">
    <location>
        <begin position="1"/>
        <end position="83"/>
    </location>
</feature>
<gene>
    <name evidence="1" type="primary">csrA</name>
    <name type="ordered locus">Tpet_0673</name>
</gene>
<accession>A5IKH0</accession>
<reference key="1">
    <citation type="submission" date="2007-05" db="EMBL/GenBank/DDBJ databases">
        <title>Complete sequence of Thermotoga petrophila RKU-1.</title>
        <authorList>
            <consortium name="US DOE Joint Genome Institute"/>
            <person name="Copeland A."/>
            <person name="Lucas S."/>
            <person name="Lapidus A."/>
            <person name="Barry K."/>
            <person name="Glavina del Rio T."/>
            <person name="Dalin E."/>
            <person name="Tice H."/>
            <person name="Pitluck S."/>
            <person name="Sims D."/>
            <person name="Brettin T."/>
            <person name="Bruce D."/>
            <person name="Detter J.C."/>
            <person name="Han C."/>
            <person name="Tapia R."/>
            <person name="Schmutz J."/>
            <person name="Larimer F."/>
            <person name="Land M."/>
            <person name="Hauser L."/>
            <person name="Kyrpides N."/>
            <person name="Mikhailova N."/>
            <person name="Nelson K."/>
            <person name="Gogarten J.P."/>
            <person name="Noll K."/>
            <person name="Richardson P."/>
        </authorList>
    </citation>
    <scope>NUCLEOTIDE SEQUENCE [LARGE SCALE GENOMIC DNA]</scope>
    <source>
        <strain>ATCC BAA-488 / DSM 13995 / JCM 10881 / RKU-1</strain>
    </source>
</reference>
<proteinExistence type="inferred from homology"/>
<comment type="function">
    <text evidence="1">A translational regulator that binds mRNA to regulate translation initiation and/or mRNA stability. Usually binds in the 5'-UTR at or near the Shine-Dalgarno sequence preventing ribosome-binding, thus repressing translation. Its main target seems to be the major flagellin gene, while its function is anatagonized by FliW.</text>
</comment>
<comment type="subunit">
    <text evidence="1">Homodimer; the beta-strands of each monomer intercalate to form a hydrophobic core, while the alpha-helices form wings that extend away from the core.</text>
</comment>
<comment type="subcellular location">
    <subcellularLocation>
        <location evidence="1">Cytoplasm</location>
    </subcellularLocation>
</comment>
<comment type="similarity">
    <text evidence="1">Belongs to the CsrA/RsmA family.</text>
</comment>
<dbReference type="EMBL" id="CP000702">
    <property type="protein sequence ID" value="ABQ46693.1"/>
    <property type="molecule type" value="Genomic_DNA"/>
</dbReference>
<dbReference type="RefSeq" id="WP_011943281.1">
    <property type="nucleotide sequence ID" value="NC_009486.1"/>
</dbReference>
<dbReference type="SMR" id="A5IKH0"/>
<dbReference type="STRING" id="390874.Tpet_0673"/>
<dbReference type="KEGG" id="tpt:Tpet_0673"/>
<dbReference type="eggNOG" id="COG1551">
    <property type="taxonomic scope" value="Bacteria"/>
</dbReference>
<dbReference type="HOGENOM" id="CLU_164837_0_2_0"/>
<dbReference type="Proteomes" id="UP000006558">
    <property type="component" value="Chromosome"/>
</dbReference>
<dbReference type="GO" id="GO:0005829">
    <property type="term" value="C:cytosol"/>
    <property type="evidence" value="ECO:0007669"/>
    <property type="project" value="TreeGrafter"/>
</dbReference>
<dbReference type="GO" id="GO:0048027">
    <property type="term" value="F:mRNA 5'-UTR binding"/>
    <property type="evidence" value="ECO:0007669"/>
    <property type="project" value="UniProtKB-UniRule"/>
</dbReference>
<dbReference type="GO" id="GO:0044781">
    <property type="term" value="P:bacterial-type flagellum organization"/>
    <property type="evidence" value="ECO:0007669"/>
    <property type="project" value="UniProtKB-KW"/>
</dbReference>
<dbReference type="GO" id="GO:0006402">
    <property type="term" value="P:mRNA catabolic process"/>
    <property type="evidence" value="ECO:0007669"/>
    <property type="project" value="InterPro"/>
</dbReference>
<dbReference type="GO" id="GO:0045947">
    <property type="term" value="P:negative regulation of translational initiation"/>
    <property type="evidence" value="ECO:0007669"/>
    <property type="project" value="UniProtKB-UniRule"/>
</dbReference>
<dbReference type="GO" id="GO:1902208">
    <property type="term" value="P:regulation of bacterial-type flagellum assembly"/>
    <property type="evidence" value="ECO:0007669"/>
    <property type="project" value="UniProtKB-UniRule"/>
</dbReference>
<dbReference type="GO" id="GO:0006109">
    <property type="term" value="P:regulation of carbohydrate metabolic process"/>
    <property type="evidence" value="ECO:0007669"/>
    <property type="project" value="InterPro"/>
</dbReference>
<dbReference type="FunFam" id="2.60.40.4380:FF:000002">
    <property type="entry name" value="Translational regulator CsrA"/>
    <property type="match status" value="1"/>
</dbReference>
<dbReference type="Gene3D" id="2.60.40.4380">
    <property type="entry name" value="Translational regulator CsrA"/>
    <property type="match status" value="1"/>
</dbReference>
<dbReference type="HAMAP" id="MF_00167">
    <property type="entry name" value="CsrA"/>
    <property type="match status" value="1"/>
</dbReference>
<dbReference type="InterPro" id="IPR003751">
    <property type="entry name" value="CsrA"/>
</dbReference>
<dbReference type="InterPro" id="IPR036107">
    <property type="entry name" value="CsrA_sf"/>
</dbReference>
<dbReference type="NCBIfam" id="TIGR00202">
    <property type="entry name" value="csrA"/>
    <property type="match status" value="1"/>
</dbReference>
<dbReference type="NCBIfam" id="NF002469">
    <property type="entry name" value="PRK01712.1"/>
    <property type="match status" value="1"/>
</dbReference>
<dbReference type="PANTHER" id="PTHR34984">
    <property type="entry name" value="CARBON STORAGE REGULATOR"/>
    <property type="match status" value="1"/>
</dbReference>
<dbReference type="PANTHER" id="PTHR34984:SF1">
    <property type="entry name" value="CARBON STORAGE REGULATOR"/>
    <property type="match status" value="1"/>
</dbReference>
<dbReference type="Pfam" id="PF02599">
    <property type="entry name" value="CsrA"/>
    <property type="match status" value="1"/>
</dbReference>
<dbReference type="SUPFAM" id="SSF117130">
    <property type="entry name" value="CsrA-like"/>
    <property type="match status" value="1"/>
</dbReference>
<name>CSRA_THEP1</name>